<gene>
    <name evidence="1" type="primary">ispD</name>
    <name type="ordered locus">Bmul_1328</name>
    <name type="ordered locus">BMULJ_01918</name>
</gene>
<evidence type="ECO:0000255" key="1">
    <source>
        <dbReference type="HAMAP-Rule" id="MF_00108"/>
    </source>
</evidence>
<accession>A9AIT5</accession>
<name>ISPD_BURM1</name>
<organism>
    <name type="scientific">Burkholderia multivorans (strain ATCC 17616 / 249)</name>
    <dbReference type="NCBI Taxonomy" id="395019"/>
    <lineage>
        <taxon>Bacteria</taxon>
        <taxon>Pseudomonadati</taxon>
        <taxon>Pseudomonadota</taxon>
        <taxon>Betaproteobacteria</taxon>
        <taxon>Burkholderiales</taxon>
        <taxon>Burkholderiaceae</taxon>
        <taxon>Burkholderia</taxon>
        <taxon>Burkholderia cepacia complex</taxon>
    </lineage>
</organism>
<sequence>MTPRLFALIPCAGTGSRSGSAVPKQYRTLAGRALLHYTLAAFDACSEFAQTLVVLAPDDTHFDARRFAGLRFAVRRCGGASRQASVLNGLLGLAEFGAADHDWVLVHDAARPGITPELIRTLVATLKDDPVGGIVALPVADTLKRVPAGGDAIARTEPRDALWQAQTPQMFRIGMLRDAIQRAQREGHDLTDEASAIEWSGHTPRVVQGSLRNFKVTYPEDFALAEAILARAANAS</sequence>
<reference key="1">
    <citation type="submission" date="2007-10" db="EMBL/GenBank/DDBJ databases">
        <title>Complete sequence of chromosome 1 of Burkholderia multivorans ATCC 17616.</title>
        <authorList>
            <person name="Copeland A."/>
            <person name="Lucas S."/>
            <person name="Lapidus A."/>
            <person name="Barry K."/>
            <person name="Glavina del Rio T."/>
            <person name="Dalin E."/>
            <person name="Tice H."/>
            <person name="Pitluck S."/>
            <person name="Chain P."/>
            <person name="Malfatti S."/>
            <person name="Shin M."/>
            <person name="Vergez L."/>
            <person name="Schmutz J."/>
            <person name="Larimer F."/>
            <person name="Land M."/>
            <person name="Hauser L."/>
            <person name="Kyrpides N."/>
            <person name="Kim E."/>
            <person name="Tiedje J."/>
            <person name="Richardson P."/>
        </authorList>
    </citation>
    <scope>NUCLEOTIDE SEQUENCE [LARGE SCALE GENOMIC DNA]</scope>
    <source>
        <strain>ATCC 17616 / 249</strain>
    </source>
</reference>
<reference key="2">
    <citation type="submission" date="2007-04" db="EMBL/GenBank/DDBJ databases">
        <title>Complete genome sequence of Burkholderia multivorans ATCC 17616.</title>
        <authorList>
            <person name="Ohtsubo Y."/>
            <person name="Yamashita A."/>
            <person name="Kurokawa K."/>
            <person name="Takami H."/>
            <person name="Yuhara S."/>
            <person name="Nishiyama E."/>
            <person name="Endo R."/>
            <person name="Miyazaki R."/>
            <person name="Ono A."/>
            <person name="Yano K."/>
            <person name="Ito M."/>
            <person name="Sota M."/>
            <person name="Yuji N."/>
            <person name="Hattori M."/>
            <person name="Tsuda M."/>
        </authorList>
    </citation>
    <scope>NUCLEOTIDE SEQUENCE [LARGE SCALE GENOMIC DNA]</scope>
    <source>
        <strain>ATCC 17616 / 249</strain>
    </source>
</reference>
<comment type="function">
    <text evidence="1">Catalyzes the formation of 4-diphosphocytidyl-2-C-methyl-D-erythritol from CTP and 2-C-methyl-D-erythritol 4-phosphate (MEP).</text>
</comment>
<comment type="catalytic activity">
    <reaction evidence="1">
        <text>2-C-methyl-D-erythritol 4-phosphate + CTP + H(+) = 4-CDP-2-C-methyl-D-erythritol + diphosphate</text>
        <dbReference type="Rhea" id="RHEA:13429"/>
        <dbReference type="ChEBI" id="CHEBI:15378"/>
        <dbReference type="ChEBI" id="CHEBI:33019"/>
        <dbReference type="ChEBI" id="CHEBI:37563"/>
        <dbReference type="ChEBI" id="CHEBI:57823"/>
        <dbReference type="ChEBI" id="CHEBI:58262"/>
        <dbReference type="EC" id="2.7.7.60"/>
    </reaction>
</comment>
<comment type="pathway">
    <text evidence="1">Isoprenoid biosynthesis; isopentenyl diphosphate biosynthesis via DXP pathway; isopentenyl diphosphate from 1-deoxy-D-xylulose 5-phosphate: step 2/6.</text>
</comment>
<comment type="similarity">
    <text evidence="1">Belongs to the IspD/TarI cytidylyltransferase family. IspD subfamily.</text>
</comment>
<dbReference type="EC" id="2.7.7.60" evidence="1"/>
<dbReference type="EMBL" id="CP000868">
    <property type="protein sequence ID" value="ABX15016.1"/>
    <property type="molecule type" value="Genomic_DNA"/>
</dbReference>
<dbReference type="EMBL" id="AP009385">
    <property type="protein sequence ID" value="BAG43835.1"/>
    <property type="molecule type" value="Genomic_DNA"/>
</dbReference>
<dbReference type="RefSeq" id="WP_006402218.1">
    <property type="nucleotide sequence ID" value="NC_010804.1"/>
</dbReference>
<dbReference type="SMR" id="A9AIT5"/>
<dbReference type="STRING" id="395019.BMULJ_01918"/>
<dbReference type="KEGG" id="bmj:BMULJ_01918"/>
<dbReference type="KEGG" id="bmu:Bmul_1328"/>
<dbReference type="eggNOG" id="COG1211">
    <property type="taxonomic scope" value="Bacteria"/>
</dbReference>
<dbReference type="HOGENOM" id="CLU_061281_3_0_4"/>
<dbReference type="UniPathway" id="UPA00056">
    <property type="reaction ID" value="UER00093"/>
</dbReference>
<dbReference type="Proteomes" id="UP000008815">
    <property type="component" value="Chromosome 1"/>
</dbReference>
<dbReference type="GO" id="GO:0050518">
    <property type="term" value="F:2-C-methyl-D-erythritol 4-phosphate cytidylyltransferase activity"/>
    <property type="evidence" value="ECO:0007669"/>
    <property type="project" value="UniProtKB-UniRule"/>
</dbReference>
<dbReference type="GO" id="GO:0019288">
    <property type="term" value="P:isopentenyl diphosphate biosynthetic process, methylerythritol 4-phosphate pathway"/>
    <property type="evidence" value="ECO:0007669"/>
    <property type="project" value="UniProtKB-UniRule"/>
</dbReference>
<dbReference type="CDD" id="cd02516">
    <property type="entry name" value="CDP-ME_synthetase"/>
    <property type="match status" value="1"/>
</dbReference>
<dbReference type="FunFam" id="3.90.550.10:FF:000003">
    <property type="entry name" value="2-C-methyl-D-erythritol 4-phosphate cytidylyltransferase"/>
    <property type="match status" value="1"/>
</dbReference>
<dbReference type="Gene3D" id="3.90.550.10">
    <property type="entry name" value="Spore Coat Polysaccharide Biosynthesis Protein SpsA, Chain A"/>
    <property type="match status" value="1"/>
</dbReference>
<dbReference type="HAMAP" id="MF_00108">
    <property type="entry name" value="IspD"/>
    <property type="match status" value="1"/>
</dbReference>
<dbReference type="InterPro" id="IPR001228">
    <property type="entry name" value="IspD"/>
</dbReference>
<dbReference type="InterPro" id="IPR034683">
    <property type="entry name" value="IspD/TarI"/>
</dbReference>
<dbReference type="InterPro" id="IPR050088">
    <property type="entry name" value="IspD/TarI_cytidylyltransf_bact"/>
</dbReference>
<dbReference type="InterPro" id="IPR018294">
    <property type="entry name" value="ISPD_synthase_CS"/>
</dbReference>
<dbReference type="InterPro" id="IPR029044">
    <property type="entry name" value="Nucleotide-diphossugar_trans"/>
</dbReference>
<dbReference type="NCBIfam" id="TIGR00453">
    <property type="entry name" value="ispD"/>
    <property type="match status" value="1"/>
</dbReference>
<dbReference type="PANTHER" id="PTHR32125">
    <property type="entry name" value="2-C-METHYL-D-ERYTHRITOL 4-PHOSPHATE CYTIDYLYLTRANSFERASE, CHLOROPLASTIC"/>
    <property type="match status" value="1"/>
</dbReference>
<dbReference type="PANTHER" id="PTHR32125:SF4">
    <property type="entry name" value="2-C-METHYL-D-ERYTHRITOL 4-PHOSPHATE CYTIDYLYLTRANSFERASE, CHLOROPLASTIC"/>
    <property type="match status" value="1"/>
</dbReference>
<dbReference type="Pfam" id="PF01128">
    <property type="entry name" value="IspD"/>
    <property type="match status" value="1"/>
</dbReference>
<dbReference type="SUPFAM" id="SSF53448">
    <property type="entry name" value="Nucleotide-diphospho-sugar transferases"/>
    <property type="match status" value="1"/>
</dbReference>
<dbReference type="PROSITE" id="PS01295">
    <property type="entry name" value="ISPD"/>
    <property type="match status" value="1"/>
</dbReference>
<proteinExistence type="inferred from homology"/>
<feature type="chain" id="PRO_1000094313" description="2-C-methyl-D-erythritol 4-phosphate cytidylyltransferase">
    <location>
        <begin position="1"/>
        <end position="236"/>
    </location>
</feature>
<feature type="site" description="Transition state stabilizer" evidence="1">
    <location>
        <position position="17"/>
    </location>
</feature>
<feature type="site" description="Transition state stabilizer" evidence="1">
    <location>
        <position position="24"/>
    </location>
</feature>
<feature type="site" description="Positions MEP for the nucleophilic attack" evidence="1">
    <location>
        <position position="159"/>
    </location>
</feature>
<feature type="site" description="Positions MEP for the nucleophilic attack" evidence="1">
    <location>
        <position position="215"/>
    </location>
</feature>
<protein>
    <recommendedName>
        <fullName evidence="1">2-C-methyl-D-erythritol 4-phosphate cytidylyltransferase</fullName>
        <ecNumber evidence="1">2.7.7.60</ecNumber>
    </recommendedName>
    <alternativeName>
        <fullName evidence="1">4-diphosphocytidyl-2C-methyl-D-erythritol synthase</fullName>
    </alternativeName>
    <alternativeName>
        <fullName evidence="1">MEP cytidylyltransferase</fullName>
        <shortName evidence="1">MCT</shortName>
    </alternativeName>
</protein>
<keyword id="KW-0414">Isoprene biosynthesis</keyword>
<keyword id="KW-0548">Nucleotidyltransferase</keyword>
<keyword id="KW-1185">Reference proteome</keyword>
<keyword id="KW-0808">Transferase</keyword>